<name>NDUF8_HUMAN</name>
<proteinExistence type="evidence at protein level"/>
<feature type="chain" id="PRO_0000299480" description="NADH dehydrogenase [ubiquinone] 1 alpha subcomplex assembly factor 8">
    <location>
        <begin position="1"/>
        <end position="74"/>
    </location>
</feature>
<feature type="domain" description="CHCH" evidence="1">
    <location>
        <begin position="22"/>
        <end position="69"/>
    </location>
</feature>
<feature type="short sequence motif" description="Cx9C motif 1" evidence="1">
    <location>
        <begin position="25"/>
        <end position="35"/>
    </location>
</feature>
<feature type="short sequence motif" description="Cx9C motif 2" evidence="1">
    <location>
        <begin position="51"/>
        <end position="61"/>
    </location>
</feature>
<feature type="disulfide bond" evidence="1">
    <location>
        <begin position="25"/>
        <end position="61"/>
    </location>
</feature>
<feature type="disulfide bond" evidence="1">
    <location>
        <begin position="35"/>
        <end position="51"/>
    </location>
</feature>
<feature type="sequence variant" id="VAR_083800" description="In MC1DN34; uncertain significance; dbSNP:rs1598368033." evidence="3">
    <original>F</original>
    <variation>L</variation>
    <location>
        <position position="55"/>
    </location>
</feature>
<organism>
    <name type="scientific">Homo sapiens</name>
    <name type="common">Human</name>
    <dbReference type="NCBI Taxonomy" id="9606"/>
    <lineage>
        <taxon>Eukaryota</taxon>
        <taxon>Metazoa</taxon>
        <taxon>Chordata</taxon>
        <taxon>Craniata</taxon>
        <taxon>Vertebrata</taxon>
        <taxon>Euteleostomi</taxon>
        <taxon>Mammalia</taxon>
        <taxon>Eutheria</taxon>
        <taxon>Euarchontoglires</taxon>
        <taxon>Primates</taxon>
        <taxon>Haplorrhini</taxon>
        <taxon>Catarrhini</taxon>
        <taxon>Hominidae</taxon>
        <taxon>Homo</taxon>
    </lineage>
</organism>
<gene>
    <name evidence="4" type="primary">NDUFAF8</name>
    <name evidence="4" type="synonym">C17orf89</name>
</gene>
<keyword id="KW-0225">Disease variant</keyword>
<keyword id="KW-1015">Disulfide bond</keyword>
<keyword id="KW-0496">Mitochondrion</keyword>
<keyword id="KW-1274">Primary mitochondrial disease</keyword>
<keyword id="KW-1267">Proteomics identification</keyword>
<keyword id="KW-1185">Reference proteome</keyword>
<evidence type="ECO:0000255" key="1">
    <source>
        <dbReference type="PROSITE-ProRule" id="PRU01150"/>
    </source>
</evidence>
<evidence type="ECO:0000269" key="2">
    <source>
    </source>
</evidence>
<evidence type="ECO:0000269" key="3">
    <source>
    </source>
</evidence>
<evidence type="ECO:0000312" key="4">
    <source>
        <dbReference type="HGNC" id="HGNC:33551"/>
    </source>
</evidence>
<comment type="function">
    <text evidence="2">Involved in the assembly of mitochondrial NADH:ubiquinone oxidoreductase complex (complex I, MT-ND1) (PubMed:27499296). Required to stabilize NDUFAF5 (PubMed:27499296).</text>
</comment>
<comment type="subunit">
    <text evidence="2">Interacts with NDUFAF5.</text>
</comment>
<comment type="interaction">
    <interactant intactId="EBI-20593474">
        <id>A1L188</id>
    </interactant>
    <interactant intactId="EBI-10762958">
        <id>Q5TEU4</id>
        <label>NDUFAF5</label>
    </interactant>
    <organismsDiffer>false</organismsDiffer>
    <experiments>11</experiments>
</comment>
<comment type="subcellular location">
    <subcellularLocation>
        <location evidence="2">Mitochondrion</location>
    </subcellularLocation>
</comment>
<comment type="disease" evidence="3">
    <disease id="DI-05760">
        <name>Mitochondrial complex I deficiency, nuclear type 34</name>
        <acronym>MC1DN34</acronym>
        <description>A form of mitochondrial complex I deficiency, the most common biochemical signature of mitochondrial disorders, a group of highly heterogeneous conditions characterized by defective oxidative phosphorylation, which collectively affects 1 in 5-10000 live births. Clinical disorders have variable severity, ranging from lethal neonatal disease to adult-onset neurodegenerative disorders. Phenotypes include macrocephaly with progressive leukodystrophy, non-specific encephalopathy, cardiomyopathy, myopathy, liver disease, Leigh syndrome, Leber hereditary optic neuropathy, and some forms of Parkinson disease. MC1DN34 transmission pattern is consistent with autosomal recessive inheritance.</description>
        <dbReference type="MIM" id="618776"/>
    </disease>
    <text>The disease is caused by variants affecting the gene represented in this entry.</text>
</comment>
<protein>
    <recommendedName>
        <fullName evidence="4">NADH dehydrogenase [ubiquinone] 1 alpha subcomplex assembly factor 8</fullName>
    </recommendedName>
</protein>
<dbReference type="EMBL" id="CH471099">
    <property type="protein sequence ID" value="EAW89640.1"/>
    <property type="molecule type" value="Genomic_DNA"/>
</dbReference>
<dbReference type="EMBL" id="BC127837">
    <property type="protein sequence ID" value="AAI27838.1"/>
    <property type="molecule type" value="mRNA"/>
</dbReference>
<dbReference type="CCDS" id="CCDS45809.1"/>
<dbReference type="RefSeq" id="NP_001079990.1">
    <property type="nucleotide sequence ID" value="NM_001086521.2"/>
</dbReference>
<dbReference type="SMR" id="A1L188"/>
<dbReference type="BioGRID" id="129780">
    <property type="interactions" value="40"/>
</dbReference>
<dbReference type="FunCoup" id="A1L188">
    <property type="interactions" value="357"/>
</dbReference>
<dbReference type="IntAct" id="A1L188">
    <property type="interactions" value="26"/>
</dbReference>
<dbReference type="MINT" id="A1L188"/>
<dbReference type="STRING" id="9606.ENSP00000400184"/>
<dbReference type="GlyGen" id="A1L188">
    <property type="glycosylation" value="2 sites, 1 O-linked glycan (2 sites)"/>
</dbReference>
<dbReference type="iPTMnet" id="A1L188"/>
<dbReference type="PhosphoSitePlus" id="A1L188"/>
<dbReference type="BioMuta" id="NDUFAF8"/>
<dbReference type="jPOST" id="A1L188"/>
<dbReference type="MassIVE" id="A1L188"/>
<dbReference type="PaxDb" id="9606-ENSP00000400184"/>
<dbReference type="PeptideAtlas" id="A1L188"/>
<dbReference type="ProteomicsDB" id="136"/>
<dbReference type="Pumba" id="A1L188"/>
<dbReference type="Antibodypedia" id="66310">
    <property type="antibodies" value="10 antibodies from 6 providers"/>
</dbReference>
<dbReference type="DNASU" id="284184"/>
<dbReference type="Ensembl" id="ENST00000431388.3">
    <property type="protein sequence ID" value="ENSP00000400184.2"/>
    <property type="gene ID" value="ENSG00000224877.4"/>
</dbReference>
<dbReference type="GeneID" id="284184"/>
<dbReference type="KEGG" id="hsa:284184"/>
<dbReference type="MANE-Select" id="ENST00000431388.3">
    <property type="protein sequence ID" value="ENSP00000400184.2"/>
    <property type="RefSeq nucleotide sequence ID" value="NM_001086521.2"/>
    <property type="RefSeq protein sequence ID" value="NP_001079990.1"/>
</dbReference>
<dbReference type="UCSC" id="uc002jzx.3">
    <property type="organism name" value="human"/>
</dbReference>
<dbReference type="AGR" id="HGNC:33551"/>
<dbReference type="CTD" id="284184"/>
<dbReference type="DisGeNET" id="284184"/>
<dbReference type="GeneCards" id="NDUFAF8"/>
<dbReference type="HGNC" id="HGNC:33551">
    <property type="gene designation" value="NDUFAF8"/>
</dbReference>
<dbReference type="HPA" id="ENSG00000224877">
    <property type="expression patterns" value="Low tissue specificity"/>
</dbReference>
<dbReference type="MalaCards" id="NDUFAF8"/>
<dbReference type="MIM" id="618461">
    <property type="type" value="gene"/>
</dbReference>
<dbReference type="MIM" id="618776">
    <property type="type" value="phenotype"/>
</dbReference>
<dbReference type="neXtProt" id="NX_A1L188"/>
<dbReference type="OpenTargets" id="ENSG00000224877"/>
<dbReference type="Orphanet" id="2609">
    <property type="disease" value="Isolated complex I deficiency"/>
</dbReference>
<dbReference type="PharmGKB" id="PA162378532"/>
<dbReference type="VEuPathDB" id="HostDB:ENSG00000224877"/>
<dbReference type="eggNOG" id="ENOG502SBX9">
    <property type="taxonomic scope" value="Eukaryota"/>
</dbReference>
<dbReference type="GeneTree" id="ENSGT00520000061927"/>
<dbReference type="HOGENOM" id="CLU_188562_0_0_1"/>
<dbReference type="InParanoid" id="A1L188"/>
<dbReference type="OMA" id="KKDLCAQ"/>
<dbReference type="OrthoDB" id="3821113at2759"/>
<dbReference type="PAN-GO" id="A1L188">
    <property type="GO annotations" value="2 GO annotations based on evolutionary models"/>
</dbReference>
<dbReference type="PhylomeDB" id="A1L188"/>
<dbReference type="PathwayCommons" id="A1L188"/>
<dbReference type="Reactome" id="R-HSA-6799198">
    <property type="pathway name" value="Complex I biogenesis"/>
</dbReference>
<dbReference type="SignaLink" id="A1L188"/>
<dbReference type="BioGRID-ORCS" id="284184">
    <property type="hits" value="300 hits in 1141 CRISPR screens"/>
</dbReference>
<dbReference type="ChiTaRS" id="NDUFAF8">
    <property type="organism name" value="human"/>
</dbReference>
<dbReference type="GenomeRNAi" id="284184"/>
<dbReference type="Pharos" id="A1L188">
    <property type="development level" value="Tbio"/>
</dbReference>
<dbReference type="PRO" id="PR:A1L188"/>
<dbReference type="Proteomes" id="UP000005640">
    <property type="component" value="Chromosome 17"/>
</dbReference>
<dbReference type="RNAct" id="A1L188">
    <property type="molecule type" value="protein"/>
</dbReference>
<dbReference type="Bgee" id="ENSG00000224877">
    <property type="expression patterns" value="Expressed in medial globus pallidus and 181 other cell types or tissues"/>
</dbReference>
<dbReference type="ExpressionAtlas" id="A1L188">
    <property type="expression patterns" value="baseline and differential"/>
</dbReference>
<dbReference type="GO" id="GO:0005759">
    <property type="term" value="C:mitochondrial matrix"/>
    <property type="evidence" value="ECO:0000314"/>
    <property type="project" value="FlyBase"/>
</dbReference>
<dbReference type="GO" id="GO:0005739">
    <property type="term" value="C:mitochondrion"/>
    <property type="evidence" value="ECO:0000314"/>
    <property type="project" value="UniProtKB"/>
</dbReference>
<dbReference type="GO" id="GO:0032981">
    <property type="term" value="P:mitochondrial respiratory chain complex I assembly"/>
    <property type="evidence" value="ECO:0000315"/>
    <property type="project" value="UniProtKB"/>
</dbReference>
<dbReference type="InterPro" id="IPR034595">
    <property type="entry name" value="NDUFAF8"/>
</dbReference>
<dbReference type="PANTHER" id="PTHR34561">
    <property type="entry name" value="NADH DEHYDROGENASE [UBIQUINONE] 1 ALPHA SUBCOMPLEX ASSEMBLY FACTOR 8"/>
    <property type="match status" value="1"/>
</dbReference>
<dbReference type="PANTHER" id="PTHR34561:SF1">
    <property type="entry name" value="NADH DEHYDROGENASE [UBIQUINONE] 1 ALPHA SUBCOMPLEX ASSEMBLY FACTOR 8"/>
    <property type="match status" value="1"/>
</dbReference>
<dbReference type="PROSITE" id="PS51808">
    <property type="entry name" value="CHCH"/>
    <property type="match status" value="1"/>
</dbReference>
<sequence>MSANGAVWGRVRSRLRAFPERLAACGAEAAAYGRCVQASTAPGGRLSKDFCAREFEALRSCFAAAAKKTLEGGC</sequence>
<reference key="1">
    <citation type="submission" date="2006-12" db="EMBL/GenBank/DDBJ databases">
        <authorList>
            <person name="Mural R.J."/>
            <person name="Istrail S."/>
            <person name="Sutton G.G."/>
            <person name="Florea L."/>
            <person name="Halpern A.L."/>
            <person name="Mobarry C.M."/>
            <person name="Lippert R."/>
            <person name="Walenz B."/>
            <person name="Shatkay H."/>
            <person name="Dew I."/>
            <person name="Miller J.R."/>
            <person name="Flanigan M.J."/>
            <person name="Edwards N.J."/>
            <person name="Bolanos R."/>
            <person name="Fasulo D."/>
            <person name="Halldorsson B.V."/>
            <person name="Hannenhalli S."/>
            <person name="Turner R."/>
            <person name="Yooseph S."/>
            <person name="Lu F."/>
            <person name="Nusskern D.R."/>
            <person name="Shue B.C."/>
            <person name="Zheng X.H."/>
            <person name="Zhong F."/>
            <person name="Delcher A.L."/>
            <person name="Huson D.H."/>
            <person name="Kravitz S.A."/>
            <person name="Mouchard L."/>
            <person name="Reinert K."/>
            <person name="Remington K.A."/>
            <person name="Clark A.G."/>
            <person name="Waterman M.S."/>
            <person name="Eichler E.E."/>
            <person name="Adams M.D."/>
            <person name="Hunkapiller M.W."/>
            <person name="Myers E.W."/>
            <person name="Venter J.C."/>
        </authorList>
    </citation>
    <scope>NUCLEOTIDE SEQUENCE [LARGE SCALE GENOMIC DNA]</scope>
</reference>
<reference key="2">
    <citation type="journal article" date="2004" name="Genome Res.">
        <title>The status, quality, and expansion of the NIH full-length cDNA project: the Mammalian Gene Collection (MGC).</title>
        <authorList>
            <consortium name="The MGC Project Team"/>
        </authorList>
    </citation>
    <scope>NUCLEOTIDE SEQUENCE [LARGE SCALE MRNA]</scope>
</reference>
<reference key="3">
    <citation type="journal article" date="2016" name="Mol. Cell">
        <title>Mitochondrial protein interaction mapping identifies regulators of respiratory chain function.</title>
        <authorList>
            <person name="Floyd B.J."/>
            <person name="Wilkerson E.M."/>
            <person name="Veling M.T."/>
            <person name="Minogue C.E."/>
            <person name="Xia C."/>
            <person name="Beebe E.T."/>
            <person name="Wrobel R.L."/>
            <person name="Cho H."/>
            <person name="Kremer L.S."/>
            <person name="Alston C.L."/>
            <person name="Gromek K.A."/>
            <person name="Dolan B.K."/>
            <person name="Ulbrich A."/>
            <person name="Stefely J.A."/>
            <person name="Bohl S.L."/>
            <person name="Werner K.M."/>
            <person name="Jochem A."/>
            <person name="Westphall M.S."/>
            <person name="Rensvold J.W."/>
            <person name="Taylor R.W."/>
            <person name="Prokisch H."/>
            <person name="Kim J.J."/>
            <person name="Coon J.J."/>
            <person name="Pagliarini D.J."/>
        </authorList>
    </citation>
    <scope>FUNCTION</scope>
    <scope>SUBCELLULAR LOCATION</scope>
    <scope>INTERACTION WITH NDUFAF5</scope>
</reference>
<reference key="4">
    <citation type="journal article" date="2020" name="Am. J. Hum. Genet.">
        <title>Pathogenic bi-allelic mutations in NDUFAF8 cause Leigh syndrome with an isolated complex I deficiency.</title>
        <authorList>
            <person name="Alston C.L."/>
            <person name="Veling M.T."/>
            <person name="Heidler J."/>
            <person name="Taylor L.S."/>
            <person name="Alaimo J.T."/>
            <person name="Sung A.Y."/>
            <person name="He L."/>
            <person name="Hopton S."/>
            <person name="Broomfield A."/>
            <person name="Pavaine J."/>
            <person name="Diaz J."/>
            <person name="Leon E."/>
            <person name="Wolf P."/>
            <person name="McFarland R."/>
            <person name="Prokisch H."/>
            <person name="Wortmann S.B."/>
            <person name="Bonnen P.E."/>
            <person name="Wittig I."/>
            <person name="Pagliarini D.J."/>
            <person name="Taylor R.W."/>
        </authorList>
    </citation>
    <scope>INVOLVEMENT IN MC1DN34</scope>
    <scope>VARIANT MC1DN34 LEU-55</scope>
</reference>
<accession>A1L188</accession>